<comment type="function">
    <text>Protease whose physiological substrate is not yet known.</text>
</comment>
<comment type="subcellular location">
    <subcellularLocation>
        <location evidence="4">Secreted</location>
    </subcellularLocation>
</comment>
<comment type="similarity">
    <text evidence="3">Belongs to the peptidase S1 family. Kallikrein subfamily.</text>
</comment>
<name>KLK15_SAGOE</name>
<dbReference type="EC" id="3.4.21.-"/>
<dbReference type="EMBL" id="AF173845">
    <property type="protein sequence ID" value="AAS45302.1"/>
    <property type="molecule type" value="Genomic_DNA"/>
</dbReference>
<dbReference type="SMR" id="Q7JIG6"/>
<dbReference type="MEROPS" id="S01.081"/>
<dbReference type="GlyCosmos" id="Q7JIG6">
    <property type="glycosylation" value="2 sites, No reported glycans"/>
</dbReference>
<dbReference type="GO" id="GO:0005576">
    <property type="term" value="C:extracellular region"/>
    <property type="evidence" value="ECO:0007669"/>
    <property type="project" value="UniProtKB-SubCell"/>
</dbReference>
<dbReference type="GO" id="GO:0030141">
    <property type="term" value="C:secretory granule"/>
    <property type="evidence" value="ECO:0007669"/>
    <property type="project" value="TreeGrafter"/>
</dbReference>
<dbReference type="GO" id="GO:0004252">
    <property type="term" value="F:serine-type endopeptidase activity"/>
    <property type="evidence" value="ECO:0007669"/>
    <property type="project" value="InterPro"/>
</dbReference>
<dbReference type="GO" id="GO:0006508">
    <property type="term" value="P:proteolysis"/>
    <property type="evidence" value="ECO:0007669"/>
    <property type="project" value="UniProtKB-KW"/>
</dbReference>
<dbReference type="CDD" id="cd00190">
    <property type="entry name" value="Tryp_SPc"/>
    <property type="match status" value="1"/>
</dbReference>
<dbReference type="FunFam" id="2.40.10.10:FF:000010">
    <property type="entry name" value="Kallikrein related peptidase 11"/>
    <property type="match status" value="1"/>
</dbReference>
<dbReference type="FunFam" id="2.40.10.10:FF:000056">
    <property type="entry name" value="Kallikrein related peptidase 11"/>
    <property type="match status" value="1"/>
</dbReference>
<dbReference type="Gene3D" id="2.40.10.10">
    <property type="entry name" value="Trypsin-like serine proteases"/>
    <property type="match status" value="2"/>
</dbReference>
<dbReference type="InterPro" id="IPR009003">
    <property type="entry name" value="Peptidase_S1_PA"/>
</dbReference>
<dbReference type="InterPro" id="IPR043504">
    <property type="entry name" value="Peptidase_S1_PA_chymotrypsin"/>
</dbReference>
<dbReference type="InterPro" id="IPR001314">
    <property type="entry name" value="Peptidase_S1A"/>
</dbReference>
<dbReference type="InterPro" id="IPR001254">
    <property type="entry name" value="Trypsin_dom"/>
</dbReference>
<dbReference type="InterPro" id="IPR018114">
    <property type="entry name" value="TRYPSIN_HIS"/>
</dbReference>
<dbReference type="PANTHER" id="PTHR24271:SF60">
    <property type="entry name" value="KALLIKREIN-15"/>
    <property type="match status" value="1"/>
</dbReference>
<dbReference type="PANTHER" id="PTHR24271">
    <property type="entry name" value="KALLIKREIN-RELATED"/>
    <property type="match status" value="1"/>
</dbReference>
<dbReference type="Pfam" id="PF00089">
    <property type="entry name" value="Trypsin"/>
    <property type="match status" value="1"/>
</dbReference>
<dbReference type="PRINTS" id="PR00722">
    <property type="entry name" value="CHYMOTRYPSIN"/>
</dbReference>
<dbReference type="SMART" id="SM00020">
    <property type="entry name" value="Tryp_SPc"/>
    <property type="match status" value="1"/>
</dbReference>
<dbReference type="SUPFAM" id="SSF50494">
    <property type="entry name" value="Trypsin-like serine proteases"/>
    <property type="match status" value="1"/>
</dbReference>
<dbReference type="PROSITE" id="PS50240">
    <property type="entry name" value="TRYPSIN_DOM"/>
    <property type="match status" value="1"/>
</dbReference>
<dbReference type="PROSITE" id="PS00134">
    <property type="entry name" value="TRYPSIN_HIS"/>
    <property type="match status" value="1"/>
</dbReference>
<keyword id="KW-1015">Disulfide bond</keyword>
<keyword id="KW-0325">Glycoprotein</keyword>
<keyword id="KW-0378">Hydrolase</keyword>
<keyword id="KW-0645">Protease</keyword>
<keyword id="KW-0964">Secreted</keyword>
<keyword id="KW-0720">Serine protease</keyword>
<keyword id="KW-0732">Signal</keyword>
<keyword id="KW-0865">Zymogen</keyword>
<protein>
    <recommendedName>
        <fullName>Kallikrein-15</fullName>
        <ecNumber>3.4.21.-</ecNumber>
    </recommendedName>
</protein>
<accession>Q7JIG6</accession>
<sequence length="255" mass="28078">MWLLLPLSFLLTSTAQDGGKLLEGEECAPHSQPWQVALYERGRFNCGASLISPHWVLSAAHCQSRFMRVRLGEHNLRKRDGPEQLRTASRVIPHPRYEARSHRHDIMLLRLVQPARLTPQVRPVVLPTRCPHPGEACVVSGWGLVSHNEPGTTGRPQSQVSLPDTLHCANISIISDASCDKNYPGRLTNTMVCAGAEGRGAESCEGDSGGPLVCGGILQGIVSWGDVPCDNTTKPGVYTKVCRYVKWIRETMKRN</sequence>
<reference key="1">
    <citation type="journal article" date="2004" name="Gene">
        <title>The evolution of the glandular kallikrein locus: identification of orthologs and pseudogenes in the cotton-top tamarin.</title>
        <authorList>
            <person name="Olsson A.Y."/>
            <person name="Valtonen-Andre C."/>
            <person name="Lilja H."/>
            <person name="Lundwall A."/>
        </authorList>
    </citation>
    <scope>NUCLEOTIDE SEQUENCE [GENOMIC DNA]</scope>
</reference>
<evidence type="ECO:0000250" key="1"/>
<evidence type="ECO:0000255" key="2"/>
<evidence type="ECO:0000255" key="3">
    <source>
        <dbReference type="PROSITE-ProRule" id="PRU00274"/>
    </source>
</evidence>
<evidence type="ECO:0000305" key="4"/>
<gene>
    <name type="primary">KLK15</name>
</gene>
<feature type="signal peptide" evidence="2">
    <location>
        <begin position="1"/>
        <end position="15"/>
    </location>
</feature>
<feature type="propeptide" id="PRO_0000027962" description="Activation peptide" evidence="2">
    <location>
        <begin position="16"/>
        <end position="20"/>
    </location>
</feature>
<feature type="chain" id="PRO_0000027963" description="Kallikrein-15">
    <location>
        <begin position="21"/>
        <end position="255"/>
    </location>
</feature>
<feature type="region of interest" description="Serine protease">
    <location>
        <begin position="21"/>
        <end position="253"/>
    </location>
</feature>
<feature type="active site" description="Charge relay system" evidence="1">
    <location>
        <position position="61"/>
    </location>
</feature>
<feature type="active site" description="Charge relay system" evidence="1">
    <location>
        <position position="105"/>
    </location>
</feature>
<feature type="active site" description="Charge relay system" evidence="1">
    <location>
        <position position="208"/>
    </location>
</feature>
<feature type="glycosylation site" description="N-linked (GlcNAc...) asparagine" evidence="2">
    <location>
        <position position="170"/>
    </location>
</feature>
<feature type="glycosylation site" description="N-linked (GlcNAc...) asparagine" evidence="2">
    <location>
        <position position="231"/>
    </location>
</feature>
<feature type="disulfide bond" evidence="3">
    <location>
        <begin position="46"/>
        <end position="62"/>
    </location>
</feature>
<feature type="disulfide bond" evidence="3">
    <location>
        <begin position="137"/>
        <end position="214"/>
    </location>
</feature>
<feature type="disulfide bond" evidence="3">
    <location>
        <begin position="179"/>
        <end position="193"/>
    </location>
</feature>
<feature type="disulfide bond" evidence="3">
    <location>
        <begin position="204"/>
        <end position="229"/>
    </location>
</feature>
<proteinExistence type="inferred from homology"/>
<organism>
    <name type="scientific">Saguinus oedipus</name>
    <name type="common">Cotton-top tamarin</name>
    <dbReference type="NCBI Taxonomy" id="9490"/>
    <lineage>
        <taxon>Eukaryota</taxon>
        <taxon>Metazoa</taxon>
        <taxon>Chordata</taxon>
        <taxon>Craniata</taxon>
        <taxon>Vertebrata</taxon>
        <taxon>Euteleostomi</taxon>
        <taxon>Mammalia</taxon>
        <taxon>Eutheria</taxon>
        <taxon>Euarchontoglires</taxon>
        <taxon>Primates</taxon>
        <taxon>Haplorrhini</taxon>
        <taxon>Platyrrhini</taxon>
        <taxon>Cebidae</taxon>
        <taxon>Callitrichinae</taxon>
        <taxon>Saguinus</taxon>
    </lineage>
</organism>